<accession>Q58974</accession>
<proteinExistence type="predicted"/>
<keyword id="KW-1185">Reference proteome</keyword>
<reference key="1">
    <citation type="journal article" date="1996" name="Science">
        <title>Complete genome sequence of the methanogenic archaeon, Methanococcus jannaschii.</title>
        <authorList>
            <person name="Bult C.J."/>
            <person name="White O."/>
            <person name="Olsen G.J."/>
            <person name="Zhou L."/>
            <person name="Fleischmann R.D."/>
            <person name="Sutton G.G."/>
            <person name="Blake J.A."/>
            <person name="FitzGerald L.M."/>
            <person name="Clayton R.A."/>
            <person name="Gocayne J.D."/>
            <person name="Kerlavage A.R."/>
            <person name="Dougherty B.A."/>
            <person name="Tomb J.-F."/>
            <person name="Adams M.D."/>
            <person name="Reich C.I."/>
            <person name="Overbeek R."/>
            <person name="Kirkness E.F."/>
            <person name="Weinstock K.G."/>
            <person name="Merrick J.M."/>
            <person name="Glodek A."/>
            <person name="Scott J.L."/>
            <person name="Geoghagen N.S.M."/>
            <person name="Weidman J.F."/>
            <person name="Fuhrmann J.L."/>
            <person name="Nguyen D."/>
            <person name="Utterback T.R."/>
            <person name="Kelley J.M."/>
            <person name="Peterson J.D."/>
            <person name="Sadow P.W."/>
            <person name="Hanna M.C."/>
            <person name="Cotton M.D."/>
            <person name="Roberts K.M."/>
            <person name="Hurst M.A."/>
            <person name="Kaine B.P."/>
            <person name="Borodovsky M."/>
            <person name="Klenk H.-P."/>
            <person name="Fraser C.M."/>
            <person name="Smith H.O."/>
            <person name="Woese C.R."/>
            <person name="Venter J.C."/>
        </authorList>
    </citation>
    <scope>NUCLEOTIDE SEQUENCE [LARGE SCALE GENOMIC DNA]</scope>
    <source>
        <strain>ATCC 43067 / DSM 2661 / JAL-1 / JCM 10045 / NBRC 100440</strain>
    </source>
</reference>
<protein>
    <recommendedName>
        <fullName>Uncharacterized protein MJ1579</fullName>
    </recommendedName>
</protein>
<sequence length="70" mass="8483">MNQRKEIELLMFDVLPYMANMEFIKELLESVNSLEELEQKVRELLEKETDITKKTDLKILLEKIEERKNK</sequence>
<organism>
    <name type="scientific">Methanocaldococcus jannaschii (strain ATCC 43067 / DSM 2661 / JAL-1 / JCM 10045 / NBRC 100440)</name>
    <name type="common">Methanococcus jannaschii</name>
    <dbReference type="NCBI Taxonomy" id="243232"/>
    <lineage>
        <taxon>Archaea</taxon>
        <taxon>Methanobacteriati</taxon>
        <taxon>Methanobacteriota</taxon>
        <taxon>Methanomada group</taxon>
        <taxon>Methanococci</taxon>
        <taxon>Methanococcales</taxon>
        <taxon>Methanocaldococcaceae</taxon>
        <taxon>Methanocaldococcus</taxon>
    </lineage>
</organism>
<feature type="chain" id="PRO_0000107424" description="Uncharacterized protein MJ1579">
    <location>
        <begin position="1"/>
        <end position="70"/>
    </location>
</feature>
<gene>
    <name type="ordered locus">MJ1579</name>
</gene>
<dbReference type="EMBL" id="L77117">
    <property type="protein sequence ID" value="AAB99607.1"/>
    <property type="molecule type" value="Genomic_DNA"/>
</dbReference>
<dbReference type="PIR" id="B64497">
    <property type="entry name" value="B64497"/>
</dbReference>
<dbReference type="RefSeq" id="WP_010871104.1">
    <property type="nucleotide sequence ID" value="NC_000909.1"/>
</dbReference>
<dbReference type="SMR" id="Q58974"/>
<dbReference type="FunCoup" id="Q58974">
    <property type="interactions" value="6"/>
</dbReference>
<dbReference type="STRING" id="243232.MJ_1579"/>
<dbReference type="PaxDb" id="243232-MJ_1579"/>
<dbReference type="EnsemblBacteria" id="AAB99607">
    <property type="protein sequence ID" value="AAB99607"/>
    <property type="gene ID" value="MJ_1579"/>
</dbReference>
<dbReference type="GeneID" id="1452488"/>
<dbReference type="KEGG" id="mja:MJ_1579"/>
<dbReference type="eggNOG" id="arCOG05091">
    <property type="taxonomic scope" value="Archaea"/>
</dbReference>
<dbReference type="HOGENOM" id="CLU_203607_0_0_2"/>
<dbReference type="InParanoid" id="Q58974"/>
<dbReference type="OrthoDB" id="65985at2157"/>
<dbReference type="Proteomes" id="UP000000805">
    <property type="component" value="Chromosome"/>
</dbReference>
<name>Y1579_METJA</name>